<reference key="1">
    <citation type="journal article" date="2003" name="Proc. Natl. Acad. Sci. U.S.A.">
        <title>Complete genome sequence of Lactobacillus plantarum WCFS1.</title>
        <authorList>
            <person name="Kleerebezem M."/>
            <person name="Boekhorst J."/>
            <person name="van Kranenburg R."/>
            <person name="Molenaar D."/>
            <person name="Kuipers O.P."/>
            <person name="Leer R."/>
            <person name="Tarchini R."/>
            <person name="Peters S.A."/>
            <person name="Sandbrink H.M."/>
            <person name="Fiers M.W.E.J."/>
            <person name="Stiekema W."/>
            <person name="Klein Lankhorst R.M."/>
            <person name="Bron P.A."/>
            <person name="Hoffer S.M."/>
            <person name="Nierop Groot M.N."/>
            <person name="Kerkhoven R."/>
            <person name="De Vries M."/>
            <person name="Ursing B."/>
            <person name="De Vos W.M."/>
            <person name="Siezen R.J."/>
        </authorList>
    </citation>
    <scope>NUCLEOTIDE SEQUENCE [LARGE SCALE GENOMIC DNA]</scope>
    <source>
        <strain>ATCC BAA-793 / NCIMB 8826 / WCFS1</strain>
    </source>
</reference>
<reference key="2">
    <citation type="journal article" date="2012" name="J. Bacteriol.">
        <title>Complete resequencing and reannotation of the Lactobacillus plantarum WCFS1 genome.</title>
        <authorList>
            <person name="Siezen R.J."/>
            <person name="Francke C."/>
            <person name="Renckens B."/>
            <person name="Boekhorst J."/>
            <person name="Wels M."/>
            <person name="Kleerebezem M."/>
            <person name="van Hijum S.A."/>
        </authorList>
    </citation>
    <scope>NUCLEOTIDE SEQUENCE [LARGE SCALE GENOMIC DNA]</scope>
    <scope>GENOME REANNOTATION</scope>
    <source>
        <strain>ATCC BAA-793 / NCIMB 8826 / WCFS1</strain>
    </source>
</reference>
<accession>Q88T35</accession>
<accession>F9UT83</accession>
<evidence type="ECO:0000255" key="1">
    <source>
        <dbReference type="HAMAP-Rule" id="MF_01039"/>
    </source>
</evidence>
<sequence>MAKLVLIRHGQSEWNLSNQFTGWVDVDLSEKGVEEAKAAGQKVKEAGLEFDYAFTSVLTRAIKTLHYVLEESDQLWIPETKTWRLNERHYGALQGLNKKETAEKYGDDQVHIWRRSYDVLPPLLSADDEGSAVNDRRYADLDPNIVPGGENLKVTLERVMPFWEDQIAPKLLDGKNVIIAAHGNSLRALSKYIEQISDDDIMDLEMATGEPVVYDFDEKLKVLGKEKLGK</sequence>
<feature type="chain" id="PRO_0000179887" description="2,3-bisphosphoglycerate-dependent phosphoglycerate mutase 2">
    <location>
        <begin position="1"/>
        <end position="230"/>
    </location>
</feature>
<feature type="active site" description="Tele-phosphohistidine intermediate" evidence="1">
    <location>
        <position position="9"/>
    </location>
</feature>
<feature type="active site" description="Proton donor/acceptor" evidence="1">
    <location>
        <position position="87"/>
    </location>
</feature>
<feature type="binding site" evidence="1">
    <location>
        <begin position="8"/>
        <end position="15"/>
    </location>
    <ligand>
        <name>substrate</name>
    </ligand>
</feature>
<feature type="binding site" evidence="1">
    <location>
        <begin position="21"/>
        <end position="22"/>
    </location>
    <ligand>
        <name>substrate</name>
    </ligand>
</feature>
<feature type="binding site" evidence="1">
    <location>
        <position position="60"/>
    </location>
    <ligand>
        <name>substrate</name>
    </ligand>
</feature>
<feature type="binding site" evidence="1">
    <location>
        <begin position="87"/>
        <end position="90"/>
    </location>
    <ligand>
        <name>substrate</name>
    </ligand>
</feature>
<feature type="binding site" evidence="1">
    <location>
        <position position="98"/>
    </location>
    <ligand>
        <name>substrate</name>
    </ligand>
</feature>
<feature type="binding site" evidence="1">
    <location>
        <begin position="114"/>
        <end position="115"/>
    </location>
    <ligand>
        <name>substrate</name>
    </ligand>
</feature>
<feature type="binding site" evidence="1">
    <location>
        <begin position="183"/>
        <end position="184"/>
    </location>
    <ligand>
        <name>substrate</name>
    </ligand>
</feature>
<feature type="site" description="Transition state stabilizer" evidence="1">
    <location>
        <position position="182"/>
    </location>
</feature>
<name>GPMA2_LACPL</name>
<protein>
    <recommendedName>
        <fullName evidence="1">2,3-bisphosphoglycerate-dependent phosphoglycerate mutase 2</fullName>
        <shortName evidence="1">BPG-dependent PGAM 2</shortName>
        <shortName evidence="1">PGAM 2</shortName>
        <shortName evidence="1">Phosphoglyceromutase 2</shortName>
        <shortName evidence="1">dPGM 2</shortName>
        <ecNumber evidence="1">5.4.2.11</ecNumber>
    </recommendedName>
</protein>
<proteinExistence type="inferred from homology"/>
<comment type="function">
    <text evidence="1">Catalyzes the interconversion of 2-phosphoglycerate and 3-phosphoglycerate.</text>
</comment>
<comment type="catalytic activity">
    <reaction evidence="1">
        <text>(2R)-2-phosphoglycerate = (2R)-3-phosphoglycerate</text>
        <dbReference type="Rhea" id="RHEA:15901"/>
        <dbReference type="ChEBI" id="CHEBI:58272"/>
        <dbReference type="ChEBI" id="CHEBI:58289"/>
        <dbReference type="EC" id="5.4.2.11"/>
    </reaction>
</comment>
<comment type="pathway">
    <text evidence="1">Carbohydrate degradation; glycolysis; pyruvate from D-glyceraldehyde 3-phosphate: step 3/5.</text>
</comment>
<comment type="similarity">
    <text evidence="1">Belongs to the phosphoglycerate mutase family. BPG-dependent PGAM subfamily.</text>
</comment>
<gene>
    <name evidence="1" type="primary">gpmA2</name>
    <name type="synonym">pmg9</name>
    <name type="ordered locus">lp_3170</name>
</gene>
<keyword id="KW-0312">Gluconeogenesis</keyword>
<keyword id="KW-0324">Glycolysis</keyword>
<keyword id="KW-0413">Isomerase</keyword>
<keyword id="KW-1185">Reference proteome</keyword>
<dbReference type="EC" id="5.4.2.11" evidence="1"/>
<dbReference type="EMBL" id="AL935263">
    <property type="protein sequence ID" value="CCC80201.1"/>
    <property type="molecule type" value="Genomic_DNA"/>
</dbReference>
<dbReference type="RefSeq" id="WP_003642405.1">
    <property type="nucleotide sequence ID" value="NC_004567.2"/>
</dbReference>
<dbReference type="RefSeq" id="YP_004890715.1">
    <property type="nucleotide sequence ID" value="NC_004567.2"/>
</dbReference>
<dbReference type="SMR" id="Q88T35"/>
<dbReference type="STRING" id="220668.lp_3170"/>
<dbReference type="EnsemblBacteria" id="CCC80201">
    <property type="protein sequence ID" value="CCC80201"/>
    <property type="gene ID" value="lp_3170"/>
</dbReference>
<dbReference type="KEGG" id="lpl:lp_3170"/>
<dbReference type="PATRIC" id="fig|220668.9.peg.2649"/>
<dbReference type="eggNOG" id="COG0588">
    <property type="taxonomic scope" value="Bacteria"/>
</dbReference>
<dbReference type="HOGENOM" id="CLU_033323_1_5_9"/>
<dbReference type="OrthoDB" id="9781415at2"/>
<dbReference type="PhylomeDB" id="Q88T35"/>
<dbReference type="UniPathway" id="UPA00109">
    <property type="reaction ID" value="UER00186"/>
</dbReference>
<dbReference type="Proteomes" id="UP000000432">
    <property type="component" value="Chromosome"/>
</dbReference>
<dbReference type="GO" id="GO:0004619">
    <property type="term" value="F:phosphoglycerate mutase activity"/>
    <property type="evidence" value="ECO:0007669"/>
    <property type="project" value="UniProtKB-EC"/>
</dbReference>
<dbReference type="GO" id="GO:0006094">
    <property type="term" value="P:gluconeogenesis"/>
    <property type="evidence" value="ECO:0007669"/>
    <property type="project" value="UniProtKB-UniRule"/>
</dbReference>
<dbReference type="GO" id="GO:0006096">
    <property type="term" value="P:glycolytic process"/>
    <property type="evidence" value="ECO:0007669"/>
    <property type="project" value="UniProtKB-UniRule"/>
</dbReference>
<dbReference type="CDD" id="cd07067">
    <property type="entry name" value="HP_PGM_like"/>
    <property type="match status" value="1"/>
</dbReference>
<dbReference type="FunFam" id="3.40.50.1240:FF:000003">
    <property type="entry name" value="2,3-bisphosphoglycerate-dependent phosphoglycerate mutase"/>
    <property type="match status" value="1"/>
</dbReference>
<dbReference type="Gene3D" id="3.40.50.1240">
    <property type="entry name" value="Phosphoglycerate mutase-like"/>
    <property type="match status" value="1"/>
</dbReference>
<dbReference type="HAMAP" id="MF_01039">
    <property type="entry name" value="PGAM_GpmA"/>
    <property type="match status" value="1"/>
</dbReference>
<dbReference type="InterPro" id="IPR013078">
    <property type="entry name" value="His_Pase_superF_clade-1"/>
</dbReference>
<dbReference type="InterPro" id="IPR029033">
    <property type="entry name" value="His_PPase_superfam"/>
</dbReference>
<dbReference type="InterPro" id="IPR001345">
    <property type="entry name" value="PG/BPGM_mutase_AS"/>
</dbReference>
<dbReference type="InterPro" id="IPR005952">
    <property type="entry name" value="Phosphogly_mut1"/>
</dbReference>
<dbReference type="NCBIfam" id="TIGR01258">
    <property type="entry name" value="pgm_1"/>
    <property type="match status" value="1"/>
</dbReference>
<dbReference type="NCBIfam" id="NF010713">
    <property type="entry name" value="PRK14115.1"/>
    <property type="match status" value="1"/>
</dbReference>
<dbReference type="NCBIfam" id="NF010714">
    <property type="entry name" value="PRK14116.1"/>
    <property type="match status" value="1"/>
</dbReference>
<dbReference type="PANTHER" id="PTHR11931">
    <property type="entry name" value="PHOSPHOGLYCERATE MUTASE"/>
    <property type="match status" value="1"/>
</dbReference>
<dbReference type="Pfam" id="PF00300">
    <property type="entry name" value="His_Phos_1"/>
    <property type="match status" value="2"/>
</dbReference>
<dbReference type="PIRSF" id="PIRSF000709">
    <property type="entry name" value="6PFK_2-Ptase"/>
    <property type="match status" value="1"/>
</dbReference>
<dbReference type="SMART" id="SM00855">
    <property type="entry name" value="PGAM"/>
    <property type="match status" value="1"/>
</dbReference>
<dbReference type="SUPFAM" id="SSF53254">
    <property type="entry name" value="Phosphoglycerate mutase-like"/>
    <property type="match status" value="1"/>
</dbReference>
<dbReference type="PROSITE" id="PS00175">
    <property type="entry name" value="PG_MUTASE"/>
    <property type="match status" value="1"/>
</dbReference>
<organism>
    <name type="scientific">Lactiplantibacillus plantarum (strain ATCC BAA-793 / NCIMB 8826 / WCFS1)</name>
    <name type="common">Lactobacillus plantarum</name>
    <dbReference type="NCBI Taxonomy" id="220668"/>
    <lineage>
        <taxon>Bacteria</taxon>
        <taxon>Bacillati</taxon>
        <taxon>Bacillota</taxon>
        <taxon>Bacilli</taxon>
        <taxon>Lactobacillales</taxon>
        <taxon>Lactobacillaceae</taxon>
        <taxon>Lactiplantibacillus</taxon>
    </lineage>
</organism>